<organism>
    <name type="scientific">Anseranas semipalmata</name>
    <name type="common">Magpie goose</name>
    <name type="synonym">Anas semipalmata</name>
    <dbReference type="NCBI Taxonomy" id="8851"/>
    <lineage>
        <taxon>Eukaryota</taxon>
        <taxon>Metazoa</taxon>
        <taxon>Chordata</taxon>
        <taxon>Craniata</taxon>
        <taxon>Vertebrata</taxon>
        <taxon>Euteleostomi</taxon>
        <taxon>Archelosauria</taxon>
        <taxon>Archosauria</taxon>
        <taxon>Dinosauria</taxon>
        <taxon>Saurischia</taxon>
        <taxon>Theropoda</taxon>
        <taxon>Coelurosauria</taxon>
        <taxon>Aves</taxon>
        <taxon>Neognathae</taxon>
        <taxon>Galloanserae</taxon>
        <taxon>Anseriformes</taxon>
        <taxon>Anseranatidae</taxon>
        <taxon>Anseranas</taxon>
    </lineage>
</organism>
<accession>P05567</accession>
<dbReference type="PIR" id="G31443">
    <property type="entry name" value="G31443"/>
</dbReference>
<dbReference type="SMR" id="P05567"/>
<dbReference type="GO" id="GO:0005576">
    <property type="term" value="C:extracellular region"/>
    <property type="evidence" value="ECO:0007669"/>
    <property type="project" value="UniProtKB-SubCell"/>
</dbReference>
<dbReference type="GO" id="GO:0004867">
    <property type="term" value="F:serine-type endopeptidase inhibitor activity"/>
    <property type="evidence" value="ECO:0007669"/>
    <property type="project" value="UniProtKB-KW"/>
</dbReference>
<dbReference type="CDD" id="cd00104">
    <property type="entry name" value="KAZAL_FS"/>
    <property type="match status" value="1"/>
</dbReference>
<dbReference type="FunFam" id="3.30.60.30:FF:000037">
    <property type="entry name" value="Ovomucoid"/>
    <property type="match status" value="1"/>
</dbReference>
<dbReference type="Gene3D" id="3.30.60.30">
    <property type="match status" value="1"/>
</dbReference>
<dbReference type="InterPro" id="IPR051597">
    <property type="entry name" value="Bifunctional_prot_inhibitor"/>
</dbReference>
<dbReference type="InterPro" id="IPR002350">
    <property type="entry name" value="Kazal_dom"/>
</dbReference>
<dbReference type="InterPro" id="IPR036058">
    <property type="entry name" value="Kazal_dom_sf"/>
</dbReference>
<dbReference type="InterPro" id="IPR001239">
    <property type="entry name" value="Prot_inh_Kazal-m"/>
</dbReference>
<dbReference type="PANTHER" id="PTHR47729:SF1">
    <property type="entry name" value="OVOMUCOID-LIKE-RELATED"/>
    <property type="match status" value="1"/>
</dbReference>
<dbReference type="PANTHER" id="PTHR47729">
    <property type="entry name" value="SERINE PEPTIDASE INHIBITOR, KAZAL TYPE 2, TANDEM DUPLICATE 1-RELATED"/>
    <property type="match status" value="1"/>
</dbReference>
<dbReference type="Pfam" id="PF00050">
    <property type="entry name" value="Kazal_1"/>
    <property type="match status" value="1"/>
</dbReference>
<dbReference type="PRINTS" id="PR00290">
    <property type="entry name" value="KAZALINHBTR"/>
</dbReference>
<dbReference type="SMART" id="SM00280">
    <property type="entry name" value="KAZAL"/>
    <property type="match status" value="1"/>
</dbReference>
<dbReference type="SUPFAM" id="SSF100895">
    <property type="entry name" value="Kazal-type serine protease inhibitors"/>
    <property type="match status" value="1"/>
</dbReference>
<dbReference type="PROSITE" id="PS00282">
    <property type="entry name" value="KAZAL_1"/>
    <property type="match status" value="1"/>
</dbReference>
<dbReference type="PROSITE" id="PS51465">
    <property type="entry name" value="KAZAL_2"/>
    <property type="match status" value="1"/>
</dbReference>
<name>IOVO_ANSSE</name>
<keyword id="KW-0903">Direct protein sequencing</keyword>
<keyword id="KW-1015">Disulfide bond</keyword>
<keyword id="KW-0325">Glycoprotein</keyword>
<keyword id="KW-0646">Protease inhibitor</keyword>
<keyword id="KW-0677">Repeat</keyword>
<keyword id="KW-0964">Secreted</keyword>
<keyword id="KW-0722">Serine protease inhibitor</keyword>
<reference key="1">
    <citation type="journal article" date="1987" name="Biochemistry">
        <title>Ovomucoid third domains from 100 avian species: isolation, sequences, and hypervariability of enzyme-inhibitor contact residues.</title>
        <authorList>
            <person name="Laskowski M. Jr."/>
            <person name="Kato I."/>
            <person name="Ardelt W."/>
            <person name="Cook J."/>
            <person name="Denton A."/>
            <person name="Empie M.W."/>
            <person name="Kohr W.J."/>
            <person name="Park S.J."/>
            <person name="Parks K."/>
            <person name="Schatzley B.L."/>
            <person name="Schoenberger O.L."/>
            <person name="Tashiro M."/>
            <person name="Vichot G."/>
            <person name="Whatley H.E."/>
            <person name="Wieczorek A."/>
            <person name="Wieczorek M."/>
        </authorList>
    </citation>
    <scope>PROTEIN SEQUENCE</scope>
</reference>
<feature type="chain" id="PRO_0000073061" description="Ovomucoid">
    <location>
        <begin position="1" status="less than"/>
        <end position="54" status="greater than"/>
    </location>
</feature>
<feature type="domain" description="Kazal-like" evidence="1">
    <location>
        <begin position="4"/>
        <end position="54"/>
    </location>
</feature>
<feature type="site" description="Reactive bond 3">
    <location>
        <begin position="16"/>
        <end position="17"/>
    </location>
</feature>
<feature type="glycosylation site" description="N-linked (GlcNAc...) asparagine">
    <location>
        <position position="43"/>
    </location>
</feature>
<feature type="disulfide bond">
    <location>
        <begin position="6"/>
        <end position="36"/>
    </location>
</feature>
<feature type="disulfide bond">
    <location>
        <begin position="14"/>
        <end position="33"/>
    </location>
</feature>
<feature type="disulfide bond">
    <location>
        <begin position="22"/>
        <end position="54"/>
    </location>
</feature>
<feature type="non-terminal residue">
    <location>
        <position position="1"/>
    </location>
</feature>
<feature type="non-terminal residue">
    <location>
        <position position="54"/>
    </location>
</feature>
<evidence type="ECO:0000255" key="1">
    <source>
        <dbReference type="PROSITE-ProRule" id="PRU00798"/>
    </source>
</evidence>
<sequence length="54" mass="5842">VATVDCSEYPKPACTLEYMPLCGSDNQTYSNKCNFCNAVVDSNGTLTLSHFGKC</sequence>
<proteinExistence type="evidence at protein level"/>
<protein>
    <recommendedName>
        <fullName>Ovomucoid</fullName>
    </recommendedName>
</protein>
<comment type="subcellular location">
    <subcellularLocation>
        <location>Secreted</location>
    </subcellularLocation>
</comment>
<comment type="domain">
    <text>Avian ovomucoid consists of three homologous, tandem Kazal family inhibitory domains.</text>
</comment>